<sequence length="424" mass="44617">MRHDDVFRLNEPRRVAVLAVHTSPLAQPGTGDAGGMNVYVLQTALHLARRGIEVEIFTRATASADPPVQRVVPGVVVRNVVAGPFEGLDKYDLPTQLCAFAAGVLRAEASHEPGYYDIVHSHYWLSGQVGWLARDRWAVPLVHTAHTLAAVKNAALAQGDSPEPPLRTVGEQQVVDEADRLIVNTDDEARQLISIHHADPARIDVVHPGVDLDVFRPGDRRAARAALGLPLDEDIVAFVGRIQPLKAPDIVLRAAAKLPGVRIVVAGGPSGTGLASPDGLALLADELGISARVTFLPPQSRPNLATLFQAANLVAVPSYSESFGLVALEAQACGTPVAAAAVGGLPVAVRDGVTGTLVAGHDVDHWADALAGLLRAPAPAAAAMSRAAAAHAATFSWDHTTDALLASYRRAIREYTTERRGVGA</sequence>
<organism>
    <name type="scientific">Mycobacterium avium (strain 104)</name>
    <dbReference type="NCBI Taxonomy" id="243243"/>
    <lineage>
        <taxon>Bacteria</taxon>
        <taxon>Bacillati</taxon>
        <taxon>Actinomycetota</taxon>
        <taxon>Actinomycetes</taxon>
        <taxon>Mycobacteriales</taxon>
        <taxon>Mycobacteriaceae</taxon>
        <taxon>Mycobacterium</taxon>
        <taxon>Mycobacterium avium complex (MAC)</taxon>
    </lineage>
</organism>
<proteinExistence type="inferred from homology"/>
<keyword id="KW-0328">Glycosyltransferase</keyword>
<keyword id="KW-0460">Magnesium</keyword>
<keyword id="KW-0479">Metal-binding</keyword>
<keyword id="KW-0808">Transferase</keyword>
<name>MSHA_MYCA1</name>
<feature type="chain" id="PRO_0000400130" description="D-inositol 3-phosphate glycosyltransferase">
    <location>
        <begin position="1"/>
        <end position="424"/>
    </location>
</feature>
<feature type="binding site" evidence="1">
    <location>
        <position position="21"/>
    </location>
    <ligand>
        <name>1D-myo-inositol 3-phosphate</name>
        <dbReference type="ChEBI" id="CHEBI:58401"/>
    </ligand>
</feature>
<feature type="binding site" evidence="1">
    <location>
        <begin position="27"/>
        <end position="28"/>
    </location>
    <ligand>
        <name>UDP-N-acetyl-alpha-D-glucosamine</name>
        <dbReference type="ChEBI" id="CHEBI:57705"/>
    </ligand>
</feature>
<feature type="binding site" evidence="1">
    <location>
        <begin position="32"/>
        <end position="37"/>
    </location>
    <ligand>
        <name>1D-myo-inositol 3-phosphate</name>
        <dbReference type="ChEBI" id="CHEBI:58401"/>
    </ligand>
</feature>
<feature type="binding site" evidence="1">
    <location>
        <position position="35"/>
    </location>
    <ligand>
        <name>UDP-N-acetyl-alpha-D-glucosamine</name>
        <dbReference type="ChEBI" id="CHEBI:57705"/>
    </ligand>
</feature>
<feature type="binding site" evidence="1">
    <location>
        <position position="90"/>
    </location>
    <ligand>
        <name>1D-myo-inositol 3-phosphate</name>
        <dbReference type="ChEBI" id="CHEBI:58401"/>
    </ligand>
</feature>
<feature type="binding site" evidence="1">
    <location>
        <position position="123"/>
    </location>
    <ligand>
        <name>1D-myo-inositol 3-phosphate</name>
        <dbReference type="ChEBI" id="CHEBI:58401"/>
    </ligand>
</feature>
<feature type="binding site" evidence="1">
    <location>
        <position position="147"/>
    </location>
    <ligand>
        <name>1D-myo-inositol 3-phosphate</name>
        <dbReference type="ChEBI" id="CHEBI:58401"/>
    </ligand>
</feature>
<feature type="binding site" evidence="1">
    <location>
        <position position="167"/>
    </location>
    <ligand>
        <name>1D-myo-inositol 3-phosphate</name>
        <dbReference type="ChEBI" id="CHEBI:58401"/>
    </ligand>
</feature>
<feature type="binding site" evidence="1">
    <location>
        <position position="241"/>
    </location>
    <ligand>
        <name>UDP-N-acetyl-alpha-D-glucosamine</name>
        <dbReference type="ChEBI" id="CHEBI:57705"/>
    </ligand>
</feature>
<feature type="binding site" evidence="1">
    <location>
        <position position="246"/>
    </location>
    <ligand>
        <name>UDP-N-acetyl-alpha-D-glucosamine</name>
        <dbReference type="ChEBI" id="CHEBI:57705"/>
    </ligand>
</feature>
<feature type="binding site" evidence="1">
    <location>
        <position position="299"/>
    </location>
    <ligand>
        <name>UDP-N-acetyl-alpha-D-glucosamine</name>
        <dbReference type="ChEBI" id="CHEBI:57705"/>
    </ligand>
</feature>
<feature type="binding site" evidence="1">
    <location>
        <position position="308"/>
    </location>
    <ligand>
        <name>Mg(2+)</name>
        <dbReference type="ChEBI" id="CHEBI:18420"/>
    </ligand>
</feature>
<feature type="binding site" evidence="1">
    <location>
        <position position="309"/>
    </location>
    <ligand>
        <name>Mg(2+)</name>
        <dbReference type="ChEBI" id="CHEBI:18420"/>
    </ligand>
</feature>
<feature type="binding site" evidence="1">
    <location>
        <position position="311"/>
    </location>
    <ligand>
        <name>Mg(2+)</name>
        <dbReference type="ChEBI" id="CHEBI:18420"/>
    </ligand>
</feature>
<feature type="binding site" evidence="1">
    <location>
        <position position="321"/>
    </location>
    <ligand>
        <name>UDP-N-acetyl-alpha-D-glucosamine</name>
        <dbReference type="ChEBI" id="CHEBI:57705"/>
    </ligand>
</feature>
<feature type="binding site" evidence="1">
    <location>
        <position position="329"/>
    </location>
    <ligand>
        <name>UDP-N-acetyl-alpha-D-glucosamine</name>
        <dbReference type="ChEBI" id="CHEBI:57705"/>
    </ligand>
</feature>
<feature type="binding site" evidence="1">
    <location>
        <position position="335"/>
    </location>
    <ligand>
        <name>Mg(2+)</name>
        <dbReference type="ChEBI" id="CHEBI:18420"/>
    </ligand>
</feature>
<protein>
    <recommendedName>
        <fullName>D-inositol 3-phosphate glycosyltransferase</fullName>
        <ecNumber evidence="1">2.4.1.250</ecNumber>
    </recommendedName>
    <alternativeName>
        <fullName evidence="1">N-acetylglucosamine-inositol-phosphate N-acetylglucosaminyltransferase</fullName>
        <shortName evidence="1">GlcNAc-Ins-P N-acetylglucosaminyltransferase</shortName>
    </alternativeName>
</protein>
<dbReference type="EC" id="2.4.1.250" evidence="1"/>
<dbReference type="EMBL" id="CP000479">
    <property type="protein sequence ID" value="ABK67713.1"/>
    <property type="molecule type" value="Genomic_DNA"/>
</dbReference>
<dbReference type="RefSeq" id="WP_011726181.1">
    <property type="nucleotide sequence ID" value="NC_008595.1"/>
</dbReference>
<dbReference type="SMR" id="A0QLK5"/>
<dbReference type="CAZy" id="GT4">
    <property type="family name" value="Glycosyltransferase Family 4"/>
</dbReference>
<dbReference type="KEGG" id="mav:MAV_4664"/>
<dbReference type="HOGENOM" id="CLU_009583_2_3_11"/>
<dbReference type="Proteomes" id="UP000001574">
    <property type="component" value="Chromosome"/>
</dbReference>
<dbReference type="GO" id="GO:0008375">
    <property type="term" value="F:acetylglucosaminyltransferase activity"/>
    <property type="evidence" value="ECO:0007669"/>
    <property type="project" value="UniProtKB-UniRule"/>
</dbReference>
<dbReference type="GO" id="GO:0102710">
    <property type="term" value="F:D-inositol-3-phosphate glycosyltransferase activity"/>
    <property type="evidence" value="ECO:0007669"/>
    <property type="project" value="UniProtKB-EC"/>
</dbReference>
<dbReference type="GO" id="GO:0000287">
    <property type="term" value="F:magnesium ion binding"/>
    <property type="evidence" value="ECO:0007669"/>
    <property type="project" value="UniProtKB-UniRule"/>
</dbReference>
<dbReference type="GO" id="GO:0010125">
    <property type="term" value="P:mycothiol biosynthetic process"/>
    <property type="evidence" value="ECO:0007669"/>
    <property type="project" value="UniProtKB-UniRule"/>
</dbReference>
<dbReference type="FunFam" id="3.40.50.2000:FF:000123">
    <property type="entry name" value="D-inositol-3-phosphate glycosyltransferase"/>
    <property type="match status" value="1"/>
</dbReference>
<dbReference type="Gene3D" id="3.40.50.2000">
    <property type="entry name" value="Glycogen Phosphorylase B"/>
    <property type="match status" value="2"/>
</dbReference>
<dbReference type="HAMAP" id="MF_01695">
    <property type="entry name" value="MshA"/>
    <property type="match status" value="1"/>
</dbReference>
<dbReference type="InterPro" id="IPR001296">
    <property type="entry name" value="Glyco_trans_1"/>
</dbReference>
<dbReference type="InterPro" id="IPR028098">
    <property type="entry name" value="Glyco_trans_4-like_N"/>
</dbReference>
<dbReference type="InterPro" id="IPR017814">
    <property type="entry name" value="Mycothiol_biosynthesis_MshA"/>
</dbReference>
<dbReference type="NCBIfam" id="TIGR03449">
    <property type="entry name" value="mycothiol_MshA"/>
    <property type="match status" value="1"/>
</dbReference>
<dbReference type="PANTHER" id="PTHR12526:SF510">
    <property type="entry name" value="D-INOSITOL 3-PHOSPHATE GLYCOSYLTRANSFERASE"/>
    <property type="match status" value="1"/>
</dbReference>
<dbReference type="PANTHER" id="PTHR12526">
    <property type="entry name" value="GLYCOSYLTRANSFERASE"/>
    <property type="match status" value="1"/>
</dbReference>
<dbReference type="Pfam" id="PF13579">
    <property type="entry name" value="Glyco_trans_4_4"/>
    <property type="match status" value="1"/>
</dbReference>
<dbReference type="Pfam" id="PF00534">
    <property type="entry name" value="Glycos_transf_1"/>
    <property type="match status" value="1"/>
</dbReference>
<dbReference type="SUPFAM" id="SSF53756">
    <property type="entry name" value="UDP-Glycosyltransferase/glycogen phosphorylase"/>
    <property type="match status" value="1"/>
</dbReference>
<evidence type="ECO:0000255" key="1">
    <source>
        <dbReference type="HAMAP-Rule" id="MF_01695"/>
    </source>
</evidence>
<gene>
    <name evidence="1" type="primary">mshA</name>
    <name type="ordered locus">MAV_4664</name>
</gene>
<comment type="function">
    <text evidence="1">Catalyzes the transfer of a N-acetyl-glucosamine moiety to 1D-myo-inositol 3-phosphate to produce 1D-myo-inositol 2-acetamido-2-deoxy-glucopyranoside 3-phosphate in the mycothiol biosynthesis pathway.</text>
</comment>
<comment type="catalytic activity">
    <reaction evidence="1">
        <text>1D-myo-inositol 3-phosphate + UDP-N-acetyl-alpha-D-glucosamine = 1D-myo-inositol 2-acetamido-2-deoxy-alpha-D-glucopyranoside 3-phosphate + UDP + H(+)</text>
        <dbReference type="Rhea" id="RHEA:26188"/>
        <dbReference type="ChEBI" id="CHEBI:15378"/>
        <dbReference type="ChEBI" id="CHEBI:57705"/>
        <dbReference type="ChEBI" id="CHEBI:58223"/>
        <dbReference type="ChEBI" id="CHEBI:58401"/>
        <dbReference type="ChEBI" id="CHEBI:58892"/>
        <dbReference type="EC" id="2.4.1.250"/>
    </reaction>
</comment>
<comment type="subunit">
    <text evidence="1">Homodimer.</text>
</comment>
<comment type="similarity">
    <text evidence="1">Belongs to the glycosyltransferase group 1 family. MshA subfamily.</text>
</comment>
<accession>A0QLK5</accession>
<reference key="1">
    <citation type="submission" date="2006-10" db="EMBL/GenBank/DDBJ databases">
        <authorList>
            <person name="Fleischmann R.D."/>
            <person name="Dodson R.J."/>
            <person name="Haft D.H."/>
            <person name="Merkel J.S."/>
            <person name="Nelson W.C."/>
            <person name="Fraser C.M."/>
        </authorList>
    </citation>
    <scope>NUCLEOTIDE SEQUENCE [LARGE SCALE GENOMIC DNA]</scope>
    <source>
        <strain>104</strain>
    </source>
</reference>